<reference key="1">
    <citation type="journal article" date="2003" name="Mol. Phylogenet. Evol.">
        <title>Basal actinopterygian relationships: a mitogenomic perspective on the phylogeny of the 'ancient fish.'.</title>
        <authorList>
            <person name="Inoue J.G."/>
            <person name="Miya M."/>
            <person name="Tsukamoto K."/>
            <person name="Nishida M."/>
        </authorList>
    </citation>
    <scope>NUCLEOTIDE SEQUENCE [GENOMIC DNA]</scope>
</reference>
<reference key="2">
    <citation type="journal article" date="1991" name="Mol. Biol. Evol.">
        <title>Phylogenetic relationships of neopterygian fishes, inferred from mitochondrial DNA sequences.</title>
        <authorList>
            <person name="Normark B.B."/>
            <person name="McCune A.R."/>
            <person name="Harrison R.G."/>
        </authorList>
    </citation>
    <scope>NUCLEOTIDE SEQUENCE [GENOMIC DNA] OF 36-134</scope>
</reference>
<evidence type="ECO:0000250" key="1"/>
<evidence type="ECO:0000250" key="2">
    <source>
        <dbReference type="UniProtKB" id="P00157"/>
    </source>
</evidence>
<evidence type="ECO:0000255" key="3">
    <source>
        <dbReference type="PROSITE-ProRule" id="PRU00967"/>
    </source>
</evidence>
<evidence type="ECO:0000255" key="4">
    <source>
        <dbReference type="PROSITE-ProRule" id="PRU00968"/>
    </source>
</evidence>
<keyword id="KW-0249">Electron transport</keyword>
<keyword id="KW-0349">Heme</keyword>
<keyword id="KW-0408">Iron</keyword>
<keyword id="KW-0472">Membrane</keyword>
<keyword id="KW-0479">Metal-binding</keyword>
<keyword id="KW-0496">Mitochondrion</keyword>
<keyword id="KW-0999">Mitochondrion inner membrane</keyword>
<keyword id="KW-0679">Respiratory chain</keyword>
<keyword id="KW-0812">Transmembrane</keyword>
<keyword id="KW-1133">Transmembrane helix</keyword>
<keyword id="KW-0813">Transport</keyword>
<keyword id="KW-0830">Ubiquinone</keyword>
<name>CYB_ATRSP</name>
<dbReference type="EMBL" id="AP004355">
    <property type="protein sequence ID" value="BAC23996.1"/>
    <property type="molecule type" value="Genomic_DNA"/>
</dbReference>
<dbReference type="EMBL" id="M64890">
    <property type="protein sequence ID" value="AAB01456.1"/>
    <property type="molecule type" value="Genomic_DNA"/>
</dbReference>
<dbReference type="RefSeq" id="YP_636996.1">
    <property type="nucleotide sequence ID" value="NC_008131.1"/>
</dbReference>
<dbReference type="SMR" id="P29664"/>
<dbReference type="GeneID" id="4108059"/>
<dbReference type="CTD" id="4519"/>
<dbReference type="GO" id="GO:0005743">
    <property type="term" value="C:mitochondrial inner membrane"/>
    <property type="evidence" value="ECO:0007669"/>
    <property type="project" value="UniProtKB-SubCell"/>
</dbReference>
<dbReference type="GO" id="GO:0045275">
    <property type="term" value="C:respiratory chain complex III"/>
    <property type="evidence" value="ECO:0007669"/>
    <property type="project" value="InterPro"/>
</dbReference>
<dbReference type="GO" id="GO:0046872">
    <property type="term" value="F:metal ion binding"/>
    <property type="evidence" value="ECO:0007669"/>
    <property type="project" value="UniProtKB-KW"/>
</dbReference>
<dbReference type="GO" id="GO:0008121">
    <property type="term" value="F:ubiquinol-cytochrome-c reductase activity"/>
    <property type="evidence" value="ECO:0007669"/>
    <property type="project" value="InterPro"/>
</dbReference>
<dbReference type="GO" id="GO:0006122">
    <property type="term" value="P:mitochondrial electron transport, ubiquinol to cytochrome c"/>
    <property type="evidence" value="ECO:0007669"/>
    <property type="project" value="TreeGrafter"/>
</dbReference>
<dbReference type="CDD" id="cd00290">
    <property type="entry name" value="cytochrome_b_C"/>
    <property type="match status" value="1"/>
</dbReference>
<dbReference type="CDD" id="cd00284">
    <property type="entry name" value="Cytochrome_b_N"/>
    <property type="match status" value="1"/>
</dbReference>
<dbReference type="FunFam" id="1.20.810.10:FF:000002">
    <property type="entry name" value="Cytochrome b"/>
    <property type="match status" value="1"/>
</dbReference>
<dbReference type="Gene3D" id="1.20.810.10">
    <property type="entry name" value="Cytochrome Bc1 Complex, Chain C"/>
    <property type="match status" value="1"/>
</dbReference>
<dbReference type="InterPro" id="IPR005798">
    <property type="entry name" value="Cyt_b/b6_C"/>
</dbReference>
<dbReference type="InterPro" id="IPR036150">
    <property type="entry name" value="Cyt_b/b6_C_sf"/>
</dbReference>
<dbReference type="InterPro" id="IPR005797">
    <property type="entry name" value="Cyt_b/b6_N"/>
</dbReference>
<dbReference type="InterPro" id="IPR027387">
    <property type="entry name" value="Cytb/b6-like_sf"/>
</dbReference>
<dbReference type="InterPro" id="IPR030689">
    <property type="entry name" value="Cytochrome_b"/>
</dbReference>
<dbReference type="InterPro" id="IPR048260">
    <property type="entry name" value="Cytochrome_b_C_euk/bac"/>
</dbReference>
<dbReference type="InterPro" id="IPR048259">
    <property type="entry name" value="Cytochrome_b_N_euk/bac"/>
</dbReference>
<dbReference type="InterPro" id="IPR016174">
    <property type="entry name" value="Di-haem_cyt_TM"/>
</dbReference>
<dbReference type="PANTHER" id="PTHR19271">
    <property type="entry name" value="CYTOCHROME B"/>
    <property type="match status" value="1"/>
</dbReference>
<dbReference type="PANTHER" id="PTHR19271:SF16">
    <property type="entry name" value="CYTOCHROME B"/>
    <property type="match status" value="1"/>
</dbReference>
<dbReference type="Pfam" id="PF00032">
    <property type="entry name" value="Cytochrom_B_C"/>
    <property type="match status" value="1"/>
</dbReference>
<dbReference type="Pfam" id="PF00033">
    <property type="entry name" value="Cytochrome_B"/>
    <property type="match status" value="1"/>
</dbReference>
<dbReference type="PIRSF" id="PIRSF038885">
    <property type="entry name" value="COB"/>
    <property type="match status" value="1"/>
</dbReference>
<dbReference type="SUPFAM" id="SSF81648">
    <property type="entry name" value="a domain/subunit of cytochrome bc1 complex (Ubiquinol-cytochrome c reductase)"/>
    <property type="match status" value="1"/>
</dbReference>
<dbReference type="SUPFAM" id="SSF81342">
    <property type="entry name" value="Transmembrane di-heme cytochromes"/>
    <property type="match status" value="1"/>
</dbReference>
<dbReference type="PROSITE" id="PS51003">
    <property type="entry name" value="CYTB_CTER"/>
    <property type="match status" value="1"/>
</dbReference>
<dbReference type="PROSITE" id="PS51002">
    <property type="entry name" value="CYTB_NTER"/>
    <property type="match status" value="1"/>
</dbReference>
<comment type="function">
    <text evidence="2">Component of the ubiquinol-cytochrome c reductase complex (complex III or cytochrome b-c1 complex) that is part of the mitochondrial respiratory chain. The b-c1 complex mediates electron transfer from ubiquinol to cytochrome c. Contributes to the generation of a proton gradient across the mitochondrial membrane that is then used for ATP synthesis.</text>
</comment>
<comment type="cofactor">
    <cofactor evidence="2">
        <name>heme b</name>
        <dbReference type="ChEBI" id="CHEBI:60344"/>
    </cofactor>
    <text evidence="2">Binds 2 heme b groups non-covalently.</text>
</comment>
<comment type="subunit">
    <text evidence="2">The cytochrome bc1 complex contains 3 respiratory subunits (MT-CYB, CYC1 and UQCRFS1), 2 core proteins (UQCRC1 and UQCRC2) and probably 6 low-molecular weight proteins.</text>
</comment>
<comment type="subcellular location">
    <subcellularLocation>
        <location evidence="2">Mitochondrion inner membrane</location>
        <topology evidence="2">Multi-pass membrane protein</topology>
    </subcellularLocation>
</comment>
<comment type="miscellaneous">
    <text evidence="1">Heme 1 (or BL or b562) is low-potential and absorbs at about 562 nm, and heme 2 (or BH or b566) is high-potential and absorbs at about 566 nm.</text>
</comment>
<comment type="similarity">
    <text evidence="3 4">Belongs to the cytochrome b family.</text>
</comment>
<comment type="caution">
    <text evidence="2">The full-length protein contains only eight transmembrane helices, not nine as predicted by bioinformatics tools.</text>
</comment>
<protein>
    <recommendedName>
        <fullName>Cytochrome b</fullName>
    </recommendedName>
    <alternativeName>
        <fullName>Complex III subunit 3</fullName>
    </alternativeName>
    <alternativeName>
        <fullName>Complex III subunit III</fullName>
    </alternativeName>
    <alternativeName>
        <fullName>Cytochrome b-c1 complex subunit 3</fullName>
    </alternativeName>
    <alternativeName>
        <fullName>Ubiquinol-cytochrome-c reductase complex cytochrome b subunit</fullName>
    </alternativeName>
</protein>
<geneLocation type="mitochondrion"/>
<feature type="chain" id="PRO_0000061111" description="Cytochrome b">
    <location>
        <begin position="1"/>
        <end position="380"/>
    </location>
</feature>
<feature type="transmembrane region" description="Helical" evidence="2">
    <location>
        <begin position="33"/>
        <end position="53"/>
    </location>
</feature>
<feature type="transmembrane region" description="Helical" evidence="2">
    <location>
        <begin position="77"/>
        <end position="98"/>
    </location>
</feature>
<feature type="transmembrane region" description="Helical" evidence="2">
    <location>
        <begin position="113"/>
        <end position="133"/>
    </location>
</feature>
<feature type="transmembrane region" description="Helical" evidence="2">
    <location>
        <begin position="178"/>
        <end position="198"/>
    </location>
</feature>
<feature type="transmembrane region" description="Helical" evidence="2">
    <location>
        <begin position="226"/>
        <end position="246"/>
    </location>
</feature>
<feature type="transmembrane region" description="Helical" evidence="2">
    <location>
        <begin position="288"/>
        <end position="308"/>
    </location>
</feature>
<feature type="transmembrane region" description="Helical" evidence="2">
    <location>
        <begin position="320"/>
        <end position="340"/>
    </location>
</feature>
<feature type="transmembrane region" description="Helical" evidence="2">
    <location>
        <begin position="347"/>
        <end position="367"/>
    </location>
</feature>
<feature type="binding site" description="axial binding residue" evidence="2">
    <location>
        <position position="83"/>
    </location>
    <ligand>
        <name>heme b</name>
        <dbReference type="ChEBI" id="CHEBI:60344"/>
        <label>b562</label>
    </ligand>
    <ligandPart>
        <name>Fe</name>
        <dbReference type="ChEBI" id="CHEBI:18248"/>
    </ligandPart>
</feature>
<feature type="binding site" description="axial binding residue" evidence="2">
    <location>
        <position position="97"/>
    </location>
    <ligand>
        <name>heme b</name>
        <dbReference type="ChEBI" id="CHEBI:60344"/>
        <label>b566</label>
    </ligand>
    <ligandPart>
        <name>Fe</name>
        <dbReference type="ChEBI" id="CHEBI:18248"/>
    </ligandPart>
</feature>
<feature type="binding site" description="axial binding residue" evidence="2">
    <location>
        <position position="182"/>
    </location>
    <ligand>
        <name>heme b</name>
        <dbReference type="ChEBI" id="CHEBI:60344"/>
        <label>b562</label>
    </ligand>
    <ligandPart>
        <name>Fe</name>
        <dbReference type="ChEBI" id="CHEBI:18248"/>
    </ligandPart>
</feature>
<feature type="binding site" description="axial binding residue" evidence="2">
    <location>
        <position position="196"/>
    </location>
    <ligand>
        <name>heme b</name>
        <dbReference type="ChEBI" id="CHEBI:60344"/>
        <label>b566</label>
    </ligand>
    <ligandPart>
        <name>Fe</name>
        <dbReference type="ChEBI" id="CHEBI:18248"/>
    </ligandPart>
</feature>
<feature type="binding site" evidence="2">
    <location>
        <position position="201"/>
    </location>
    <ligand>
        <name>a ubiquinone</name>
        <dbReference type="ChEBI" id="CHEBI:16389"/>
    </ligand>
</feature>
<organism>
    <name type="scientific">Atractosteus spatula</name>
    <name type="common">Alligator gar</name>
    <name type="synonym">Lepisosteus spatula</name>
    <dbReference type="NCBI Taxonomy" id="7917"/>
    <lineage>
        <taxon>Eukaryota</taxon>
        <taxon>Metazoa</taxon>
        <taxon>Chordata</taxon>
        <taxon>Craniata</taxon>
        <taxon>Vertebrata</taxon>
        <taxon>Euteleostomi</taxon>
        <taxon>Actinopterygii</taxon>
        <taxon>Neopterygii</taxon>
        <taxon>Holostei</taxon>
        <taxon>Semionotiformes</taxon>
        <taxon>Lepisosteidae</taxon>
        <taxon>Atractosteus</taxon>
    </lineage>
</organism>
<sequence>MANIRKTHPLLKIINGAVIDLPTPSNISAWWNFGSLLGLCLITQVLTGLFLAMHYTADITLAFSSVAHICRDVNYGWLLRNIHANGASFFFICIYLHIARGLYYGSYLYKETWNIGVLLLLLVMMTAFVGYVLPWGQMSFWGATVITNLLSAFPYIGDTLVQWIWGGFSVDNATLTRFFTFHFLLPFIIMGATMLHLLFLHETGSNNPTGLNSDADKVTFHPYFSYKDLLGFTILLAILSALALLNPNLLGDPENFTPANPLVTPPHIKPEWYFLFAYAILRSIPNKLGGVLALLLSILILVVVPVLHTSKQRSNTFRPPSQTLFWILVANMLVLTWIGGQPVEHPFIIIGQIASVLYFMLFLILIPLTGWLENKILDWA</sequence>
<proteinExistence type="inferred from homology"/>
<accession>P29664</accession>
<accession>Q8HMM2</accession>
<gene>
    <name type="primary">mt-cyb</name>
    <name type="synonym">cob</name>
    <name type="synonym">cytb</name>
    <name type="synonym">mtcyb</name>
</gene>